<sequence length="71" mass="7672">MLILTRRSGETLMIGDQVTVTVLGVKGNQVRVGINAPKHVAVHREEIYHRIQRGDELACSSGTRGDSGSSI</sequence>
<accession>P63877</accession>
<accession>Q87F42</accession>
<accession>Q9PH21</accession>
<feature type="chain" id="PRO_0000177102" description="Translational regulator CsrA">
    <location>
        <begin position="1"/>
        <end position="71"/>
    </location>
</feature>
<keyword id="KW-0010">Activator</keyword>
<keyword id="KW-0963">Cytoplasm</keyword>
<keyword id="KW-0678">Repressor</keyword>
<keyword id="KW-0694">RNA-binding</keyword>
<keyword id="KW-0810">Translation regulation</keyword>
<reference key="1">
    <citation type="journal article" date="2000" name="Nature">
        <title>The genome sequence of the plant pathogen Xylella fastidiosa.</title>
        <authorList>
            <person name="Simpson A.J.G."/>
            <person name="Reinach F.C."/>
            <person name="Arruda P."/>
            <person name="Abreu F.A."/>
            <person name="Acencio M."/>
            <person name="Alvarenga R."/>
            <person name="Alves L.M.C."/>
            <person name="Araya J.E."/>
            <person name="Baia G.S."/>
            <person name="Baptista C.S."/>
            <person name="Barros M.H."/>
            <person name="Bonaccorsi E.D."/>
            <person name="Bordin S."/>
            <person name="Bove J.M."/>
            <person name="Briones M.R.S."/>
            <person name="Bueno M.R.P."/>
            <person name="Camargo A.A."/>
            <person name="Camargo L.E.A."/>
            <person name="Carraro D.M."/>
            <person name="Carrer H."/>
            <person name="Colauto N.B."/>
            <person name="Colombo C."/>
            <person name="Costa F.F."/>
            <person name="Costa M.C.R."/>
            <person name="Costa-Neto C.M."/>
            <person name="Coutinho L.L."/>
            <person name="Cristofani M."/>
            <person name="Dias-Neto E."/>
            <person name="Docena C."/>
            <person name="El-Dorry H."/>
            <person name="Facincani A.P."/>
            <person name="Ferreira A.J.S."/>
            <person name="Ferreira V.C.A."/>
            <person name="Ferro J.A."/>
            <person name="Fraga J.S."/>
            <person name="Franca S.C."/>
            <person name="Franco M.C."/>
            <person name="Frohme M."/>
            <person name="Furlan L.R."/>
            <person name="Garnier M."/>
            <person name="Goldman G.H."/>
            <person name="Goldman M.H.S."/>
            <person name="Gomes S.L."/>
            <person name="Gruber A."/>
            <person name="Ho P.L."/>
            <person name="Hoheisel J.D."/>
            <person name="Junqueira M.L."/>
            <person name="Kemper E.L."/>
            <person name="Kitajima J.P."/>
            <person name="Krieger J.E."/>
            <person name="Kuramae E.E."/>
            <person name="Laigret F."/>
            <person name="Lambais M.R."/>
            <person name="Leite L.C.C."/>
            <person name="Lemos E.G.M."/>
            <person name="Lemos M.V.F."/>
            <person name="Lopes S.A."/>
            <person name="Lopes C.R."/>
            <person name="Machado J.A."/>
            <person name="Machado M.A."/>
            <person name="Madeira A.M.B.N."/>
            <person name="Madeira H.M.F."/>
            <person name="Marino C.L."/>
            <person name="Marques M.V."/>
            <person name="Martins E.A.L."/>
            <person name="Martins E.M.F."/>
            <person name="Matsukuma A.Y."/>
            <person name="Menck C.F.M."/>
            <person name="Miracca E.C."/>
            <person name="Miyaki C.Y."/>
            <person name="Monteiro-Vitorello C.B."/>
            <person name="Moon D.H."/>
            <person name="Nagai M.A."/>
            <person name="Nascimento A.L.T.O."/>
            <person name="Netto L.E.S."/>
            <person name="Nhani A. Jr."/>
            <person name="Nobrega F.G."/>
            <person name="Nunes L.R."/>
            <person name="Oliveira M.A."/>
            <person name="de Oliveira M.C."/>
            <person name="de Oliveira R.C."/>
            <person name="Palmieri D.A."/>
            <person name="Paris A."/>
            <person name="Peixoto B.R."/>
            <person name="Pereira G.A.G."/>
            <person name="Pereira H.A. Jr."/>
            <person name="Pesquero J.B."/>
            <person name="Quaggio R.B."/>
            <person name="Roberto P.G."/>
            <person name="Rodrigues V."/>
            <person name="de Rosa A.J.M."/>
            <person name="de Rosa V.E. Jr."/>
            <person name="de Sa R.G."/>
            <person name="Santelli R.V."/>
            <person name="Sawasaki H.E."/>
            <person name="da Silva A.C.R."/>
            <person name="da Silva A.M."/>
            <person name="da Silva F.R."/>
            <person name="Silva W.A. Jr."/>
            <person name="da Silveira J.F."/>
            <person name="Silvestri M.L.Z."/>
            <person name="Siqueira W.J."/>
            <person name="de Souza A.A."/>
            <person name="de Souza A.P."/>
            <person name="Terenzi M.F."/>
            <person name="Truffi D."/>
            <person name="Tsai S.M."/>
            <person name="Tsuhako M.H."/>
            <person name="Vallada H."/>
            <person name="Van Sluys M.A."/>
            <person name="Verjovski-Almeida S."/>
            <person name="Vettore A.L."/>
            <person name="Zago M.A."/>
            <person name="Zatz M."/>
            <person name="Meidanis J."/>
            <person name="Setubal J.C."/>
        </authorList>
    </citation>
    <scope>NUCLEOTIDE SEQUENCE [LARGE SCALE GENOMIC DNA]</scope>
    <source>
        <strain>9a5c</strain>
    </source>
</reference>
<proteinExistence type="inferred from homology"/>
<dbReference type="EMBL" id="AE003849">
    <property type="protein sequence ID" value="AAF82938.1"/>
    <property type="status" value="ALT_INIT"/>
    <property type="molecule type" value="Genomic_DNA"/>
</dbReference>
<dbReference type="PIR" id="D82844">
    <property type="entry name" value="D82844"/>
</dbReference>
<dbReference type="RefSeq" id="WP_004085529.1">
    <property type="nucleotide sequence ID" value="NC_002488.3"/>
</dbReference>
<dbReference type="SMR" id="P63877"/>
<dbReference type="STRING" id="160492.XF_0125"/>
<dbReference type="GeneID" id="93903786"/>
<dbReference type="KEGG" id="xfa:XF_0125"/>
<dbReference type="eggNOG" id="COG1551">
    <property type="taxonomic scope" value="Bacteria"/>
</dbReference>
<dbReference type="HOGENOM" id="CLU_164837_2_2_6"/>
<dbReference type="Proteomes" id="UP000000812">
    <property type="component" value="Chromosome"/>
</dbReference>
<dbReference type="GO" id="GO:0005829">
    <property type="term" value="C:cytosol"/>
    <property type="evidence" value="ECO:0007669"/>
    <property type="project" value="TreeGrafter"/>
</dbReference>
<dbReference type="GO" id="GO:0048027">
    <property type="term" value="F:mRNA 5'-UTR binding"/>
    <property type="evidence" value="ECO:0007669"/>
    <property type="project" value="UniProtKB-UniRule"/>
</dbReference>
<dbReference type="GO" id="GO:0006402">
    <property type="term" value="P:mRNA catabolic process"/>
    <property type="evidence" value="ECO:0007669"/>
    <property type="project" value="InterPro"/>
</dbReference>
<dbReference type="GO" id="GO:0045947">
    <property type="term" value="P:negative regulation of translational initiation"/>
    <property type="evidence" value="ECO:0007669"/>
    <property type="project" value="UniProtKB-UniRule"/>
</dbReference>
<dbReference type="GO" id="GO:0045948">
    <property type="term" value="P:positive regulation of translational initiation"/>
    <property type="evidence" value="ECO:0007669"/>
    <property type="project" value="UniProtKB-UniRule"/>
</dbReference>
<dbReference type="GO" id="GO:0006109">
    <property type="term" value="P:regulation of carbohydrate metabolic process"/>
    <property type="evidence" value="ECO:0007669"/>
    <property type="project" value="UniProtKB-UniRule"/>
</dbReference>
<dbReference type="FunFam" id="2.60.40.4380:FF:000001">
    <property type="entry name" value="Translational regulator CsrA"/>
    <property type="match status" value="1"/>
</dbReference>
<dbReference type="Gene3D" id="2.60.40.4380">
    <property type="entry name" value="Translational regulator CsrA"/>
    <property type="match status" value="1"/>
</dbReference>
<dbReference type="HAMAP" id="MF_00167">
    <property type="entry name" value="CsrA"/>
    <property type="match status" value="1"/>
</dbReference>
<dbReference type="InterPro" id="IPR003751">
    <property type="entry name" value="CsrA"/>
</dbReference>
<dbReference type="InterPro" id="IPR036107">
    <property type="entry name" value="CsrA_sf"/>
</dbReference>
<dbReference type="NCBIfam" id="TIGR00202">
    <property type="entry name" value="csrA"/>
    <property type="match status" value="1"/>
</dbReference>
<dbReference type="NCBIfam" id="NF002469">
    <property type="entry name" value="PRK01712.1"/>
    <property type="match status" value="1"/>
</dbReference>
<dbReference type="PANTHER" id="PTHR34984">
    <property type="entry name" value="CARBON STORAGE REGULATOR"/>
    <property type="match status" value="1"/>
</dbReference>
<dbReference type="PANTHER" id="PTHR34984:SF1">
    <property type="entry name" value="CARBON STORAGE REGULATOR"/>
    <property type="match status" value="1"/>
</dbReference>
<dbReference type="Pfam" id="PF02599">
    <property type="entry name" value="CsrA"/>
    <property type="match status" value="1"/>
</dbReference>
<dbReference type="SUPFAM" id="SSF117130">
    <property type="entry name" value="CsrA-like"/>
    <property type="match status" value="1"/>
</dbReference>
<gene>
    <name evidence="1" type="primary">csrA</name>
    <name type="ordered locus">XF_0125</name>
</gene>
<protein>
    <recommendedName>
        <fullName evidence="1">Translational regulator CsrA</fullName>
    </recommendedName>
    <alternativeName>
        <fullName evidence="1">Carbon storage regulator</fullName>
    </alternativeName>
</protein>
<evidence type="ECO:0000255" key="1">
    <source>
        <dbReference type="HAMAP-Rule" id="MF_00167"/>
    </source>
</evidence>
<evidence type="ECO:0000305" key="2"/>
<organism>
    <name type="scientific">Xylella fastidiosa (strain 9a5c)</name>
    <dbReference type="NCBI Taxonomy" id="160492"/>
    <lineage>
        <taxon>Bacteria</taxon>
        <taxon>Pseudomonadati</taxon>
        <taxon>Pseudomonadota</taxon>
        <taxon>Gammaproteobacteria</taxon>
        <taxon>Lysobacterales</taxon>
        <taxon>Lysobacteraceae</taxon>
        <taxon>Xylella</taxon>
    </lineage>
</organism>
<name>CSRA_XYLFA</name>
<comment type="function">
    <text evidence="1">A key translational regulator that binds mRNA to regulate translation initiation and/or mRNA stability. Mediates global changes in gene expression, shifting from rapid growth to stress survival by linking envelope stress, the stringent response and the catabolite repression systems. Usually binds in the 5'-UTR; binding at or near the Shine-Dalgarno sequence prevents ribosome-binding, repressing translation, binding elsewhere in the 5'-UTR can activate translation and/or stabilize the mRNA. Its function is antagonized by small RNA(s).</text>
</comment>
<comment type="subunit">
    <text evidence="1">Homodimer; the beta-strands of each monomer intercalate to form a hydrophobic core, while the alpha-helices form wings that extend away from the core.</text>
</comment>
<comment type="subcellular location">
    <subcellularLocation>
        <location evidence="1">Cytoplasm</location>
    </subcellularLocation>
</comment>
<comment type="similarity">
    <text evidence="1">Belongs to the CsrA/RsmA family.</text>
</comment>
<comment type="sequence caution" evidence="2">
    <conflict type="erroneous initiation">
        <sequence resource="EMBL-CDS" id="AAF82938"/>
    </conflict>
</comment>